<dbReference type="EC" id="1.14.-.-" evidence="1"/>
<dbReference type="EMBL" id="CP000114">
    <property type="protein sequence ID" value="ABA44406.1"/>
    <property type="molecule type" value="Genomic_DNA"/>
</dbReference>
<dbReference type="RefSeq" id="WP_001290916.1">
    <property type="nucleotide sequence ID" value="NC_007432.1"/>
</dbReference>
<dbReference type="SMR" id="Q3K076"/>
<dbReference type="KEGG" id="sak:SAK_1469"/>
<dbReference type="HOGENOM" id="CLU_038878_1_0_9"/>
<dbReference type="GO" id="GO:0016705">
    <property type="term" value="F:oxidoreductase activity, acting on paired donors, with incorporation or reduction of molecular oxygen"/>
    <property type="evidence" value="ECO:0007669"/>
    <property type="project" value="UniProtKB-UniRule"/>
</dbReference>
<dbReference type="GO" id="GO:0006400">
    <property type="term" value="P:tRNA modification"/>
    <property type="evidence" value="ECO:0007669"/>
    <property type="project" value="UniProtKB-UniRule"/>
</dbReference>
<dbReference type="CDD" id="cd01518">
    <property type="entry name" value="RHOD_YceA"/>
    <property type="match status" value="1"/>
</dbReference>
<dbReference type="Gene3D" id="3.30.70.100">
    <property type="match status" value="1"/>
</dbReference>
<dbReference type="Gene3D" id="3.40.250.10">
    <property type="entry name" value="Rhodanese-like domain"/>
    <property type="match status" value="1"/>
</dbReference>
<dbReference type="HAMAP" id="MF_00469">
    <property type="entry name" value="TrhO"/>
    <property type="match status" value="1"/>
</dbReference>
<dbReference type="InterPro" id="IPR001763">
    <property type="entry name" value="Rhodanese-like_dom"/>
</dbReference>
<dbReference type="InterPro" id="IPR036873">
    <property type="entry name" value="Rhodanese-like_dom_sf"/>
</dbReference>
<dbReference type="InterPro" id="IPR022111">
    <property type="entry name" value="Rhodanese_C"/>
</dbReference>
<dbReference type="InterPro" id="IPR020936">
    <property type="entry name" value="TrhO"/>
</dbReference>
<dbReference type="InterPro" id="IPR040503">
    <property type="entry name" value="TRHO_N"/>
</dbReference>
<dbReference type="NCBIfam" id="NF001135">
    <property type="entry name" value="PRK00142.1-3"/>
    <property type="match status" value="1"/>
</dbReference>
<dbReference type="NCBIfam" id="NF001137">
    <property type="entry name" value="PRK00142.1-5"/>
    <property type="match status" value="1"/>
</dbReference>
<dbReference type="PANTHER" id="PTHR43268:SF3">
    <property type="entry name" value="RHODANESE-LIKE DOMAIN-CONTAINING PROTEIN 7-RELATED"/>
    <property type="match status" value="1"/>
</dbReference>
<dbReference type="PANTHER" id="PTHR43268">
    <property type="entry name" value="THIOSULFATE SULFURTRANSFERASE/RHODANESE-LIKE DOMAIN-CONTAINING PROTEIN 2"/>
    <property type="match status" value="1"/>
</dbReference>
<dbReference type="Pfam" id="PF00581">
    <property type="entry name" value="Rhodanese"/>
    <property type="match status" value="1"/>
</dbReference>
<dbReference type="Pfam" id="PF12368">
    <property type="entry name" value="Rhodanese_C"/>
    <property type="match status" value="1"/>
</dbReference>
<dbReference type="Pfam" id="PF17773">
    <property type="entry name" value="UPF0176_N"/>
    <property type="match status" value="1"/>
</dbReference>
<dbReference type="SMART" id="SM00450">
    <property type="entry name" value="RHOD"/>
    <property type="match status" value="1"/>
</dbReference>
<dbReference type="SUPFAM" id="SSF52821">
    <property type="entry name" value="Rhodanese/Cell cycle control phosphatase"/>
    <property type="match status" value="1"/>
</dbReference>
<dbReference type="PROSITE" id="PS50206">
    <property type="entry name" value="RHODANESE_3"/>
    <property type="match status" value="1"/>
</dbReference>
<organism>
    <name type="scientific">Streptococcus agalactiae serotype Ia (strain ATCC 27591 / A909 / CDC SS700)</name>
    <dbReference type="NCBI Taxonomy" id="205921"/>
    <lineage>
        <taxon>Bacteria</taxon>
        <taxon>Bacillati</taxon>
        <taxon>Bacillota</taxon>
        <taxon>Bacilli</taxon>
        <taxon>Lactobacillales</taxon>
        <taxon>Streptococcaceae</taxon>
        <taxon>Streptococcus</taxon>
    </lineage>
</organism>
<accession>Q3K076</accession>
<sequence length="328" mass="38192">MSEKIRVLLYYKYVSIENAEEYAAKHLEFCKSIGLKGRILIADEGINGTVSGDYETTQKYMDWVHSDERFADLWFKIDEENQQAFRKMFVRYKKEIVHLGLEDNNFDSDINPLETTGEYLNPKQFKEALLDEDTVVLDTRNDYEYDLGHFRGAIRPDIRNFRELPQWVRDNKDKFMEKRVVVYCTGGVRCEKFSGWMVREGFKDVGQLHGGIATYGKDPEVQGELWDGAMYVFDDRISVPINHVNPTVISKDYFDGTPCERYVNCANPFCNKQIFASEENEAKYVRGCSPECRAHERNRYVQENGLSRQEWAERLEAIGESLPQVANV</sequence>
<protein>
    <recommendedName>
        <fullName evidence="1">tRNA uridine(34) hydroxylase</fullName>
        <ecNumber evidence="1">1.14.-.-</ecNumber>
    </recommendedName>
    <alternativeName>
        <fullName evidence="1">tRNA hydroxylation protein O</fullName>
    </alternativeName>
</protein>
<feature type="chain" id="PRO_0000242949" description="tRNA uridine(34) hydroxylase">
    <location>
        <begin position="1"/>
        <end position="328"/>
    </location>
</feature>
<feature type="domain" description="Rhodanese" evidence="1">
    <location>
        <begin position="130"/>
        <end position="224"/>
    </location>
</feature>
<feature type="active site" description="Cysteine persulfide intermediate" evidence="1">
    <location>
        <position position="184"/>
    </location>
</feature>
<comment type="function">
    <text evidence="1">Catalyzes oxygen-dependent 5-hydroxyuridine (ho5U) modification at position 34 in tRNAs.</text>
</comment>
<comment type="catalytic activity">
    <reaction evidence="1">
        <text>uridine(34) in tRNA + AH2 + O2 = 5-hydroxyuridine(34) in tRNA + A + H2O</text>
        <dbReference type="Rhea" id="RHEA:64224"/>
        <dbReference type="Rhea" id="RHEA-COMP:11727"/>
        <dbReference type="Rhea" id="RHEA-COMP:13381"/>
        <dbReference type="ChEBI" id="CHEBI:13193"/>
        <dbReference type="ChEBI" id="CHEBI:15377"/>
        <dbReference type="ChEBI" id="CHEBI:15379"/>
        <dbReference type="ChEBI" id="CHEBI:17499"/>
        <dbReference type="ChEBI" id="CHEBI:65315"/>
        <dbReference type="ChEBI" id="CHEBI:136877"/>
    </reaction>
</comment>
<comment type="similarity">
    <text evidence="1">Belongs to the TrhO family.</text>
</comment>
<gene>
    <name evidence="1" type="primary">trhO</name>
    <name type="ordered locus">SAK_1469</name>
</gene>
<reference key="1">
    <citation type="journal article" date="2005" name="Proc. Natl. Acad. Sci. U.S.A.">
        <title>Genome analysis of multiple pathogenic isolates of Streptococcus agalactiae: implications for the microbial 'pan-genome'.</title>
        <authorList>
            <person name="Tettelin H."/>
            <person name="Masignani V."/>
            <person name="Cieslewicz M.J."/>
            <person name="Donati C."/>
            <person name="Medini D."/>
            <person name="Ward N.L."/>
            <person name="Angiuoli S.V."/>
            <person name="Crabtree J."/>
            <person name="Jones A.L."/>
            <person name="Durkin A.S."/>
            <person name="DeBoy R.T."/>
            <person name="Davidsen T.M."/>
            <person name="Mora M."/>
            <person name="Scarselli M."/>
            <person name="Margarit y Ros I."/>
            <person name="Peterson J.D."/>
            <person name="Hauser C.R."/>
            <person name="Sundaram J.P."/>
            <person name="Nelson W.C."/>
            <person name="Madupu R."/>
            <person name="Brinkac L.M."/>
            <person name="Dodson R.J."/>
            <person name="Rosovitz M.J."/>
            <person name="Sullivan S.A."/>
            <person name="Daugherty S.C."/>
            <person name="Haft D.H."/>
            <person name="Selengut J."/>
            <person name="Gwinn M.L."/>
            <person name="Zhou L."/>
            <person name="Zafar N."/>
            <person name="Khouri H."/>
            <person name="Radune D."/>
            <person name="Dimitrov G."/>
            <person name="Watkins K."/>
            <person name="O'Connor K.J."/>
            <person name="Smith S."/>
            <person name="Utterback T.R."/>
            <person name="White O."/>
            <person name="Rubens C.E."/>
            <person name="Grandi G."/>
            <person name="Madoff L.C."/>
            <person name="Kasper D.L."/>
            <person name="Telford J.L."/>
            <person name="Wessels M.R."/>
            <person name="Rappuoli R."/>
            <person name="Fraser C.M."/>
        </authorList>
    </citation>
    <scope>NUCLEOTIDE SEQUENCE [LARGE SCALE GENOMIC DNA]</scope>
    <source>
        <strain>ATCC 27591 / A909 / CDC SS700</strain>
    </source>
</reference>
<evidence type="ECO:0000255" key="1">
    <source>
        <dbReference type="HAMAP-Rule" id="MF_00469"/>
    </source>
</evidence>
<keyword id="KW-0560">Oxidoreductase</keyword>
<keyword id="KW-0819">tRNA processing</keyword>
<proteinExistence type="inferred from homology"/>
<name>TRHO_STRA1</name>